<reference key="1">
    <citation type="journal article" date="2008" name="PLoS Genet.">
        <title>Genomic islands in the pathogenic filamentous fungus Aspergillus fumigatus.</title>
        <authorList>
            <person name="Fedorova N.D."/>
            <person name="Khaldi N."/>
            <person name="Joardar V.S."/>
            <person name="Maiti R."/>
            <person name="Amedeo P."/>
            <person name="Anderson M.J."/>
            <person name="Crabtree J."/>
            <person name="Silva J.C."/>
            <person name="Badger J.H."/>
            <person name="Albarraq A."/>
            <person name="Angiuoli S."/>
            <person name="Bussey H."/>
            <person name="Bowyer P."/>
            <person name="Cotty P.J."/>
            <person name="Dyer P.S."/>
            <person name="Egan A."/>
            <person name="Galens K."/>
            <person name="Fraser-Liggett C.M."/>
            <person name="Haas B.J."/>
            <person name="Inman J.M."/>
            <person name="Kent R."/>
            <person name="Lemieux S."/>
            <person name="Malavazi I."/>
            <person name="Orvis J."/>
            <person name="Roemer T."/>
            <person name="Ronning C.M."/>
            <person name="Sundaram J.P."/>
            <person name="Sutton G."/>
            <person name="Turner G."/>
            <person name="Venter J.C."/>
            <person name="White O.R."/>
            <person name="Whitty B.R."/>
            <person name="Youngman P."/>
            <person name="Wolfe K.H."/>
            <person name="Goldman G.H."/>
            <person name="Wortman J.R."/>
            <person name="Jiang B."/>
            <person name="Denning D.W."/>
            <person name="Nierman W.C."/>
        </authorList>
    </citation>
    <scope>NUCLEOTIDE SEQUENCE [LARGE SCALE GENOMIC DNA]</scope>
    <source>
        <strain>ATCC 1007 / CBS 513.65 / DSM 816 / NCTC 3887 / NRRL 1 / QM 1276 / 107</strain>
    </source>
</reference>
<comment type="function">
    <text evidence="1">Nuclear serine protease which mediates apoptosis.</text>
</comment>
<comment type="subcellular location">
    <subcellularLocation>
        <location evidence="1">Nucleus</location>
    </subcellularLocation>
</comment>
<comment type="similarity">
    <text evidence="4">Belongs to the peptidase S1C family.</text>
</comment>
<dbReference type="EC" id="3.4.21.-"/>
<dbReference type="EMBL" id="DS027060">
    <property type="protein sequence ID" value="EAW06992.1"/>
    <property type="molecule type" value="Genomic_DNA"/>
</dbReference>
<dbReference type="RefSeq" id="XP_001268418.1">
    <property type="nucleotide sequence ID" value="XM_001268417.1"/>
</dbReference>
<dbReference type="SMR" id="A1CUK5"/>
<dbReference type="STRING" id="344612.A1CUK5"/>
<dbReference type="EnsemblFungi" id="EAW06992">
    <property type="protein sequence ID" value="EAW06992"/>
    <property type="gene ID" value="ACLA_086940"/>
</dbReference>
<dbReference type="GeneID" id="4699972"/>
<dbReference type="KEGG" id="act:ACLA_086940"/>
<dbReference type="VEuPathDB" id="FungiDB:ACLA_086940"/>
<dbReference type="eggNOG" id="KOG1421">
    <property type="taxonomic scope" value="Eukaryota"/>
</dbReference>
<dbReference type="HOGENOM" id="CLU_003212_0_0_1"/>
<dbReference type="OMA" id="FWGHCVF"/>
<dbReference type="OrthoDB" id="4217619at2759"/>
<dbReference type="Proteomes" id="UP000006701">
    <property type="component" value="Unassembled WGS sequence"/>
</dbReference>
<dbReference type="GO" id="GO:0005634">
    <property type="term" value="C:nucleus"/>
    <property type="evidence" value="ECO:0007669"/>
    <property type="project" value="UniProtKB-SubCell"/>
</dbReference>
<dbReference type="GO" id="GO:0004252">
    <property type="term" value="F:serine-type endopeptidase activity"/>
    <property type="evidence" value="ECO:0007669"/>
    <property type="project" value="InterPro"/>
</dbReference>
<dbReference type="GO" id="GO:0006915">
    <property type="term" value="P:apoptotic process"/>
    <property type="evidence" value="ECO:0007669"/>
    <property type="project" value="UniProtKB-KW"/>
</dbReference>
<dbReference type="GO" id="GO:0006508">
    <property type="term" value="P:proteolysis"/>
    <property type="evidence" value="ECO:0007669"/>
    <property type="project" value="UniProtKB-KW"/>
</dbReference>
<dbReference type="CDD" id="cd06786">
    <property type="entry name" value="cpPDZ1_ScNma111-like"/>
    <property type="match status" value="1"/>
</dbReference>
<dbReference type="CDD" id="cd06719">
    <property type="entry name" value="PDZ2-4_Nma111p-like"/>
    <property type="match status" value="2"/>
</dbReference>
<dbReference type="Gene3D" id="2.30.42.10">
    <property type="match status" value="2"/>
</dbReference>
<dbReference type="Gene3D" id="2.40.10.120">
    <property type="match status" value="2"/>
</dbReference>
<dbReference type="InterPro" id="IPR001478">
    <property type="entry name" value="PDZ"/>
</dbReference>
<dbReference type="InterPro" id="IPR025926">
    <property type="entry name" value="PDZ-like_dom"/>
</dbReference>
<dbReference type="InterPro" id="IPR041489">
    <property type="entry name" value="PDZ_6"/>
</dbReference>
<dbReference type="InterPro" id="IPR036034">
    <property type="entry name" value="PDZ_sf"/>
</dbReference>
<dbReference type="InterPro" id="IPR009003">
    <property type="entry name" value="Peptidase_S1_PA"/>
</dbReference>
<dbReference type="InterPro" id="IPR001940">
    <property type="entry name" value="Peptidase_S1C"/>
</dbReference>
<dbReference type="PANTHER" id="PTHR46366">
    <property type="entry name" value="PRO-APOPTOTIC SERINE PROTEASE NMA111"/>
    <property type="match status" value="1"/>
</dbReference>
<dbReference type="PANTHER" id="PTHR46366:SF8">
    <property type="entry name" value="PRO-APOPTOTIC SERINE PROTEASE NMA111"/>
    <property type="match status" value="1"/>
</dbReference>
<dbReference type="Pfam" id="PF12812">
    <property type="entry name" value="PDZ_1"/>
    <property type="match status" value="2"/>
</dbReference>
<dbReference type="Pfam" id="PF17820">
    <property type="entry name" value="PDZ_6"/>
    <property type="match status" value="1"/>
</dbReference>
<dbReference type="Pfam" id="PF13365">
    <property type="entry name" value="Trypsin_2"/>
    <property type="match status" value="1"/>
</dbReference>
<dbReference type="PRINTS" id="PR00834">
    <property type="entry name" value="PROTEASES2C"/>
</dbReference>
<dbReference type="SMART" id="SM00228">
    <property type="entry name" value="PDZ"/>
    <property type="match status" value="2"/>
</dbReference>
<dbReference type="SUPFAM" id="SSF50156">
    <property type="entry name" value="PDZ domain-like"/>
    <property type="match status" value="3"/>
</dbReference>
<dbReference type="SUPFAM" id="SSF50494">
    <property type="entry name" value="Trypsin-like serine proteases"/>
    <property type="match status" value="2"/>
</dbReference>
<sequence>MDMSGESSIKRRRSSIAASAERPAKHLRPENSTLTPGDATPANGTVYAVEDEGDAGRMMPIGPAQADSPEWQATIENVVKSVVSIHFCQTCSFDTDMSMSSQATGFVVDAERGYILTNRHVVCAGPFWGYCIFDNHEECDVRPVYRDPVHDFGILKFDPKAIRYLELTELKLRPEAARVGSEIRVVGNDAGEKLSILSGVISRLDRNAPEYGDGYCDFNTNYIQAAAAASGGSSGSPVVNIDGHAIALQAGGRADGAATDYFLPLDRPLRALQCIQRGEPVTRGTIQTQWILKPFDECRRLGLTPDWEAAVRKAAPQETSMLVAEIILPEGPADGKLEEGDVLLQVNGELLTQFIRLDDILDSSVGKPVRLLVQRGGQNVEVECEVGDLHAITPDRFVTVAGGTFHNLSYQQARLYAIATRGVYICEAAGSFKLENTLSGWIIDSVDKRPTRNLDEFIEVMRAIPDRSRVVVSYRHIRDLHTRGTGIVYIDRHWHPKMRMAVRNDGTGLWDFSDLADPVPAAAPVPRKADFIHLDGVSQAAVSDIVRSFVRVSCTMPLKLDGYPQAKKTGYGLVVDAEKGLVVVSRAIVPYDLCDINITVADSIIVTAQVVFLHPLQNYTVIQYDPSLVQAPVQSAKLSTEYIKQGQETIFVGFNQNFRIVVAKTTVTDITTVSIPANASAPRYRAINLDAVTVDTGLSGQCTNGVLIGEDGVVQALWLNYLGERTPSSHKDVEYHLGFATPALLPVTTKIQQGIIPKLRILNMESYVVQMSQARIMGVSEQWIQKVAQANPARHQLFMVRKVDCPPPQYSSTADALEEGDIILTLDGKLITRVSELDTMYDKEVLDVLIVRNGEELHLKVPTIPTEDLETDRAVVFCGAVLQKPHHAVRQQISKLHSEVYVSARSRGSPAYQYGLSPTNFITAVNGVPTPNLDSFVREVSKIPDNTYFRLRAVTFDNVPWVVTMKKNDHYFPMSEYIKDPSQPLGWLTVSHDRDRHKDGITPDQANLNPDAMDEAFEQVSDVEPDVE</sequence>
<gene>
    <name type="primary">nma111</name>
    <name type="ORF">ACLA_086940</name>
</gene>
<protein>
    <recommendedName>
        <fullName>Pro-apoptotic serine protease nma111</fullName>
        <ecNumber>3.4.21.-</ecNumber>
    </recommendedName>
</protein>
<name>NM111_ASPCL</name>
<evidence type="ECO:0000250" key="1"/>
<evidence type="ECO:0000255" key="2"/>
<evidence type="ECO:0000256" key="3">
    <source>
        <dbReference type="SAM" id="MobiDB-lite"/>
    </source>
</evidence>
<evidence type="ECO:0000305" key="4"/>
<accession>A1CUK5</accession>
<proteinExistence type="inferred from homology"/>
<keyword id="KW-0053">Apoptosis</keyword>
<keyword id="KW-0378">Hydrolase</keyword>
<keyword id="KW-0539">Nucleus</keyword>
<keyword id="KW-0645">Protease</keyword>
<keyword id="KW-1185">Reference proteome</keyword>
<keyword id="KW-0677">Repeat</keyword>
<keyword id="KW-0720">Serine protease</keyword>
<organism>
    <name type="scientific">Aspergillus clavatus (strain ATCC 1007 / CBS 513.65 / DSM 816 / NCTC 3887 / NRRL 1 / QM 1276 / 107)</name>
    <dbReference type="NCBI Taxonomy" id="344612"/>
    <lineage>
        <taxon>Eukaryota</taxon>
        <taxon>Fungi</taxon>
        <taxon>Dikarya</taxon>
        <taxon>Ascomycota</taxon>
        <taxon>Pezizomycotina</taxon>
        <taxon>Eurotiomycetes</taxon>
        <taxon>Eurotiomycetidae</taxon>
        <taxon>Eurotiales</taxon>
        <taxon>Aspergillaceae</taxon>
        <taxon>Aspergillus</taxon>
        <taxon>Aspergillus subgen. Fumigati</taxon>
    </lineage>
</organism>
<feature type="chain" id="PRO_0000320345" description="Pro-apoptotic serine protease nma111">
    <location>
        <begin position="1"/>
        <end position="1028"/>
    </location>
</feature>
<feature type="domain" description="PDZ 1">
    <location>
        <begin position="289"/>
        <end position="374"/>
    </location>
</feature>
<feature type="domain" description="PDZ 2">
    <location>
        <begin position="876"/>
        <end position="957"/>
    </location>
</feature>
<feature type="region of interest" description="Disordered" evidence="3">
    <location>
        <begin position="1"/>
        <end position="45"/>
    </location>
</feature>
<feature type="region of interest" description="Serine protease">
    <location>
        <begin position="82"/>
        <end position="266"/>
    </location>
</feature>
<feature type="active site" description="Charge relay system" evidence="2">
    <location>
        <position position="120"/>
    </location>
</feature>
<feature type="active site" description="Charge relay system" evidence="2">
    <location>
        <position position="151"/>
    </location>
</feature>
<feature type="active site" description="Charge relay system" evidence="2">
    <location>
        <position position="233"/>
    </location>
</feature>